<reference key="1">
    <citation type="journal article" date="1998" name="Science">
        <title>Genome sequence of the nematode C. elegans: a platform for investigating biology.</title>
        <authorList>
            <consortium name="The C. elegans sequencing consortium"/>
        </authorList>
    </citation>
    <scope>NUCLEOTIDE SEQUENCE [LARGE SCALE GENOMIC DNA]</scope>
    <source>
        <strain>Bristol N2</strain>
    </source>
</reference>
<organism>
    <name type="scientific">Caenorhabditis elegans</name>
    <dbReference type="NCBI Taxonomy" id="6239"/>
    <lineage>
        <taxon>Eukaryota</taxon>
        <taxon>Metazoa</taxon>
        <taxon>Ecdysozoa</taxon>
        <taxon>Nematoda</taxon>
        <taxon>Chromadorea</taxon>
        <taxon>Rhabditida</taxon>
        <taxon>Rhabditina</taxon>
        <taxon>Rhabditomorpha</taxon>
        <taxon>Rhabditoidea</taxon>
        <taxon>Rhabditidae</taxon>
        <taxon>Peloderinae</taxon>
        <taxon>Caenorhabditis</taxon>
    </lineage>
</organism>
<keyword id="KW-1015">Disulfide bond</keyword>
<keyword id="KW-0325">Glycoprotein</keyword>
<keyword id="KW-1185">Reference proteome</keyword>
<keyword id="KW-0677">Repeat</keyword>
<keyword id="KW-0732">Signal</keyword>
<dbReference type="EMBL" id="BX284603">
    <property type="protein sequence ID" value="CCD71608.2"/>
    <property type="molecule type" value="Genomic_DNA"/>
</dbReference>
<dbReference type="PIR" id="T16417">
    <property type="entry name" value="T16417"/>
</dbReference>
<dbReference type="RefSeq" id="NP_001367876.1">
    <property type="nucleotide sequence ID" value="NM_001379706.1"/>
</dbReference>
<dbReference type="RefSeq" id="NP_498133.3">
    <property type="nucleotide sequence ID" value="NM_065732.4"/>
</dbReference>
<dbReference type="FunCoup" id="Q10125">
    <property type="interactions" value="192"/>
</dbReference>
<dbReference type="PaxDb" id="6239-F52C9.5"/>
<dbReference type="EnsemblMetazoa" id="F52C9.5.1">
    <property type="protein sequence ID" value="F52C9.5.1"/>
    <property type="gene ID" value="WBGene00018675"/>
</dbReference>
<dbReference type="GeneID" id="186097"/>
<dbReference type="UCSC" id="F52C9.5">
    <property type="organism name" value="c. elegans"/>
</dbReference>
<dbReference type="AGR" id="WB:WBGene00018675"/>
<dbReference type="WormBase" id="F52C9.5">
    <property type="protein sequence ID" value="CE54167"/>
    <property type="gene ID" value="WBGene00018675"/>
</dbReference>
<dbReference type="eggNOG" id="ENOG502S0RB">
    <property type="taxonomic scope" value="Eukaryota"/>
</dbReference>
<dbReference type="GeneTree" id="ENSGT00970000196729"/>
<dbReference type="HOGENOM" id="CLU_464011_0_0_1"/>
<dbReference type="InParanoid" id="Q10125"/>
<dbReference type="OrthoDB" id="5855977at2759"/>
<dbReference type="PRO" id="PR:Q10125"/>
<dbReference type="Proteomes" id="UP000001940">
    <property type="component" value="Chromosome III"/>
</dbReference>
<dbReference type="Bgee" id="WBGene00018675">
    <property type="expression patterns" value="Expressed in pharyngeal muscle cell (C elegans) and 3 other cell types or tissues"/>
</dbReference>
<dbReference type="GO" id="GO:0009653">
    <property type="term" value="P:anatomical structure morphogenesis"/>
    <property type="evidence" value="ECO:0000318"/>
    <property type="project" value="GO_Central"/>
</dbReference>
<dbReference type="CDD" id="cd01099">
    <property type="entry name" value="PAN_AP_HGF"/>
    <property type="match status" value="1"/>
</dbReference>
<dbReference type="Gene3D" id="3.50.4.10">
    <property type="entry name" value="Hepatocyte Growth Factor"/>
    <property type="match status" value="3"/>
</dbReference>
<dbReference type="InterPro" id="IPR052774">
    <property type="entry name" value="Celegans_DevNeuronal_Protein"/>
</dbReference>
<dbReference type="InterPro" id="IPR003609">
    <property type="entry name" value="Pan_app"/>
</dbReference>
<dbReference type="PANTHER" id="PTHR47327">
    <property type="entry name" value="FI18240P1-RELATED"/>
    <property type="match status" value="1"/>
</dbReference>
<dbReference type="PANTHER" id="PTHR47327:SF11">
    <property type="entry name" value="PROTEIN CBG21204"/>
    <property type="match status" value="1"/>
</dbReference>
<dbReference type="Pfam" id="PF00024">
    <property type="entry name" value="PAN_1"/>
    <property type="match status" value="3"/>
</dbReference>
<dbReference type="SMART" id="SM00473">
    <property type="entry name" value="PAN_AP"/>
    <property type="match status" value="3"/>
</dbReference>
<dbReference type="SUPFAM" id="SSF57414">
    <property type="entry name" value="Hairpin loop containing domain-like"/>
    <property type="match status" value="3"/>
</dbReference>
<dbReference type="PROSITE" id="PS50948">
    <property type="entry name" value="PAN"/>
    <property type="match status" value="3"/>
</dbReference>
<evidence type="ECO:0000255" key="1"/>
<evidence type="ECO:0000255" key="2">
    <source>
        <dbReference type="PROSITE-ProRule" id="PRU00315"/>
    </source>
</evidence>
<evidence type="ECO:0000255" key="3">
    <source>
        <dbReference type="PROSITE-ProRule" id="PRU00498"/>
    </source>
</evidence>
<evidence type="ECO:0000256" key="4">
    <source>
        <dbReference type="SAM" id="MobiDB-lite"/>
    </source>
</evidence>
<evidence type="ECO:0000312" key="5">
    <source>
        <dbReference type="WormBase" id="F52C9.5"/>
    </source>
</evidence>
<name>YSM5_CAEEL</name>
<sequence length="645" mass="72817">MPSSHRLSATILIFLSLTYISSSSNLVEDITDKQDSSEDDDHLQTFPTPPPIGTTTASADSLFNRMNKILRKEEKQKSQNFQIFNEKDLVTNSNANPYFSTTRKPKNRSDSSQKARDPDPQNQVIAGIPDLSDPCFRRYENSIIVNAQPYERRSSTGLIHCKSHCLNSQIGVYSCRSFVYDNVNRVCDLFAHVGDQAPARLLKFQTRDYFEPTDIVHCLSMINGESSSSAPSSEDEDSPPSPPPSAPIVALATNTDKRDEHEEMTETIEDITVASPSSDSCPRGKQSTFLRTEGFELFSHDDQELVVGDVAECAKACIENKINGVALKCKSFDFLSSTSTCAFTSEAAVPVGNGQLKQREDASYHEKICVSKSFVESCPSTFFSRHPQMILVGFAESVSDSPSFEHCFDTCLNSYQLFGFNCTSGMYYFEENQLNCILNSENRNTQRELFTEENTDIVDYFEVECTTPRSKQSKRKMAGVRNFETDAIGADKMVTDHEDVEEDGSKWESWSECQDGKQTRRKICANFNQIEDCAEEVRDCVDEIDSTDMRMSIKRAGELENNDHEQIEDNNTDASEDPVPTKEEIAEVKQKIRRTGFKCPLNECCRVFLSCSYGLRHNSHTKQLEWCRRPCDPSLSSFKRSRLLR</sequence>
<gene>
    <name evidence="5" type="ORF">F52C9.5</name>
</gene>
<protein>
    <recommendedName>
        <fullName>Uncharacterized protein F52C9.5</fullName>
    </recommendedName>
</protein>
<proteinExistence type="inferred from homology"/>
<feature type="signal peptide" evidence="1">
    <location>
        <begin position="1"/>
        <end position="23"/>
    </location>
</feature>
<feature type="chain" id="PRO_0000014284" description="Uncharacterized protein F52C9.5">
    <location>
        <begin position="24"/>
        <end position="645"/>
    </location>
</feature>
<feature type="domain" description="PAN 1" evidence="2">
    <location>
        <begin position="135"/>
        <end position="214"/>
    </location>
</feature>
<feature type="domain" description="PAN 2" evidence="2">
    <location>
        <begin position="281"/>
        <end position="369"/>
    </location>
</feature>
<feature type="domain" description="PAN 3" evidence="2">
    <location>
        <begin position="378"/>
        <end position="465"/>
    </location>
</feature>
<feature type="region of interest" description="Disordered" evidence="4">
    <location>
        <begin position="30"/>
        <end position="58"/>
    </location>
</feature>
<feature type="region of interest" description="Disordered" evidence="4">
    <location>
        <begin position="92"/>
        <end position="129"/>
    </location>
</feature>
<feature type="region of interest" description="Disordered" evidence="4">
    <location>
        <begin position="225"/>
        <end position="247"/>
    </location>
</feature>
<feature type="region of interest" description="Disordered" evidence="4">
    <location>
        <begin position="556"/>
        <end position="582"/>
    </location>
</feature>
<feature type="compositionally biased region" description="Polar residues" evidence="4">
    <location>
        <begin position="92"/>
        <end position="102"/>
    </location>
</feature>
<feature type="compositionally biased region" description="Basic and acidic residues" evidence="4">
    <location>
        <begin position="107"/>
        <end position="119"/>
    </location>
</feature>
<feature type="compositionally biased region" description="Basic and acidic residues" evidence="4">
    <location>
        <begin position="556"/>
        <end position="567"/>
    </location>
</feature>
<feature type="glycosylation site" description="N-linked (GlcNAc...) asparagine" evidence="3">
    <location>
        <position position="107"/>
    </location>
</feature>
<feature type="glycosylation site" description="N-linked (GlcNAc...) asparagine" evidence="3">
    <location>
        <position position="421"/>
    </location>
</feature>
<feature type="glycosylation site" description="N-linked (GlcNAc...) asparagine" evidence="3">
    <location>
        <position position="570"/>
    </location>
</feature>
<feature type="disulfide bond" evidence="2">
    <location>
        <begin position="161"/>
        <end position="187"/>
    </location>
</feature>
<feature type="disulfide bond" evidence="2">
    <location>
        <begin position="165"/>
        <end position="175"/>
    </location>
</feature>
<feature type="disulfide bond" evidence="2">
    <location>
        <begin position="281"/>
        <end position="369"/>
    </location>
</feature>
<feature type="disulfide bond" evidence="2">
    <location>
        <begin position="313"/>
        <end position="341"/>
    </location>
</feature>
<feature type="disulfide bond" evidence="2">
    <location>
        <begin position="317"/>
        <end position="329"/>
    </location>
</feature>
<feature type="disulfide bond" evidence="2">
    <location>
        <begin position="378"/>
        <end position="465"/>
    </location>
</feature>
<feature type="disulfide bond" evidence="2">
    <location>
        <begin position="407"/>
        <end position="436"/>
    </location>
</feature>
<feature type="disulfide bond" evidence="2">
    <location>
        <begin position="411"/>
        <end position="422"/>
    </location>
</feature>
<accession>Q10125</accession>